<dbReference type="EC" id="4.1.2.4" evidence="1"/>
<dbReference type="EMBL" id="AE016879">
    <property type="protein sequence ID" value="AAP25789.1"/>
    <property type="molecule type" value="Genomic_DNA"/>
</dbReference>
<dbReference type="EMBL" id="AE017334">
    <property type="protein sequence ID" value="AAT31011.1"/>
    <property type="molecule type" value="Genomic_DNA"/>
</dbReference>
<dbReference type="EMBL" id="AE017225">
    <property type="protein sequence ID" value="AAT54069.1"/>
    <property type="molecule type" value="Genomic_DNA"/>
</dbReference>
<dbReference type="RefSeq" id="NP_844303.1">
    <property type="nucleotide sequence ID" value="NC_003997.3"/>
</dbReference>
<dbReference type="RefSeq" id="WP_001017446.1">
    <property type="nucleotide sequence ID" value="NZ_WXXJ01000007.1"/>
</dbReference>
<dbReference type="RefSeq" id="YP_028018.1">
    <property type="nucleotide sequence ID" value="NC_005945.1"/>
</dbReference>
<dbReference type="SMR" id="Q81RZ3"/>
<dbReference type="STRING" id="261594.GBAA_1892"/>
<dbReference type="DNASU" id="1086144"/>
<dbReference type="GeneID" id="45021821"/>
<dbReference type="KEGG" id="ban:BA_1892"/>
<dbReference type="KEGG" id="bar:GBAA_1892"/>
<dbReference type="KEGG" id="bat:BAS1754"/>
<dbReference type="PATRIC" id="fig|198094.11.peg.1864"/>
<dbReference type="eggNOG" id="COG0274">
    <property type="taxonomic scope" value="Bacteria"/>
</dbReference>
<dbReference type="HOGENOM" id="CLU_053595_0_1_9"/>
<dbReference type="OMA" id="MNACIPP"/>
<dbReference type="OrthoDB" id="9778711at2"/>
<dbReference type="UniPathway" id="UPA00002">
    <property type="reaction ID" value="UER00468"/>
</dbReference>
<dbReference type="Proteomes" id="UP000000427">
    <property type="component" value="Chromosome"/>
</dbReference>
<dbReference type="Proteomes" id="UP000000594">
    <property type="component" value="Chromosome"/>
</dbReference>
<dbReference type="GO" id="GO:0005737">
    <property type="term" value="C:cytoplasm"/>
    <property type="evidence" value="ECO:0007669"/>
    <property type="project" value="UniProtKB-SubCell"/>
</dbReference>
<dbReference type="GO" id="GO:0004139">
    <property type="term" value="F:deoxyribose-phosphate aldolase activity"/>
    <property type="evidence" value="ECO:0007669"/>
    <property type="project" value="UniProtKB-UniRule"/>
</dbReference>
<dbReference type="GO" id="GO:0006018">
    <property type="term" value="P:2-deoxyribose 1-phosphate catabolic process"/>
    <property type="evidence" value="ECO:0007669"/>
    <property type="project" value="UniProtKB-UniRule"/>
</dbReference>
<dbReference type="GO" id="GO:0016052">
    <property type="term" value="P:carbohydrate catabolic process"/>
    <property type="evidence" value="ECO:0007669"/>
    <property type="project" value="TreeGrafter"/>
</dbReference>
<dbReference type="GO" id="GO:0009264">
    <property type="term" value="P:deoxyribonucleotide catabolic process"/>
    <property type="evidence" value="ECO:0007669"/>
    <property type="project" value="InterPro"/>
</dbReference>
<dbReference type="CDD" id="cd00959">
    <property type="entry name" value="DeoC"/>
    <property type="match status" value="1"/>
</dbReference>
<dbReference type="FunFam" id="3.20.20.70:FF:000044">
    <property type="entry name" value="Deoxyribose-phosphate aldolase"/>
    <property type="match status" value="1"/>
</dbReference>
<dbReference type="Gene3D" id="3.20.20.70">
    <property type="entry name" value="Aldolase class I"/>
    <property type="match status" value="1"/>
</dbReference>
<dbReference type="HAMAP" id="MF_00114">
    <property type="entry name" value="DeoC_type1"/>
    <property type="match status" value="1"/>
</dbReference>
<dbReference type="InterPro" id="IPR013785">
    <property type="entry name" value="Aldolase_TIM"/>
</dbReference>
<dbReference type="InterPro" id="IPR011343">
    <property type="entry name" value="DeoC"/>
</dbReference>
<dbReference type="InterPro" id="IPR002915">
    <property type="entry name" value="DeoC/FbaB/LacD_aldolase"/>
</dbReference>
<dbReference type="InterPro" id="IPR028581">
    <property type="entry name" value="DeoC_typeI"/>
</dbReference>
<dbReference type="NCBIfam" id="TIGR00126">
    <property type="entry name" value="deoC"/>
    <property type="match status" value="1"/>
</dbReference>
<dbReference type="PANTHER" id="PTHR10889">
    <property type="entry name" value="DEOXYRIBOSE-PHOSPHATE ALDOLASE"/>
    <property type="match status" value="1"/>
</dbReference>
<dbReference type="PANTHER" id="PTHR10889:SF1">
    <property type="entry name" value="DEOXYRIBOSE-PHOSPHATE ALDOLASE"/>
    <property type="match status" value="1"/>
</dbReference>
<dbReference type="Pfam" id="PF01791">
    <property type="entry name" value="DeoC"/>
    <property type="match status" value="1"/>
</dbReference>
<dbReference type="PIRSF" id="PIRSF001357">
    <property type="entry name" value="DeoC"/>
    <property type="match status" value="1"/>
</dbReference>
<dbReference type="SMART" id="SM01133">
    <property type="entry name" value="DeoC"/>
    <property type="match status" value="1"/>
</dbReference>
<dbReference type="SUPFAM" id="SSF51569">
    <property type="entry name" value="Aldolase"/>
    <property type="match status" value="1"/>
</dbReference>
<evidence type="ECO:0000255" key="1">
    <source>
        <dbReference type="HAMAP-Rule" id="MF_00114"/>
    </source>
</evidence>
<gene>
    <name evidence="1" type="primary">deoC</name>
    <name type="synonym">dra</name>
    <name type="ordered locus">BA_1892</name>
    <name type="ordered locus">GBAA_1892</name>
    <name type="ordered locus">BAS1754</name>
</gene>
<reference key="1">
    <citation type="journal article" date="2003" name="Nature">
        <title>The genome sequence of Bacillus anthracis Ames and comparison to closely related bacteria.</title>
        <authorList>
            <person name="Read T.D."/>
            <person name="Peterson S.N."/>
            <person name="Tourasse N.J."/>
            <person name="Baillie L.W."/>
            <person name="Paulsen I.T."/>
            <person name="Nelson K.E."/>
            <person name="Tettelin H."/>
            <person name="Fouts D.E."/>
            <person name="Eisen J.A."/>
            <person name="Gill S.R."/>
            <person name="Holtzapple E.K."/>
            <person name="Okstad O.A."/>
            <person name="Helgason E."/>
            <person name="Rilstone J."/>
            <person name="Wu M."/>
            <person name="Kolonay J.F."/>
            <person name="Beanan M.J."/>
            <person name="Dodson R.J."/>
            <person name="Brinkac L.M."/>
            <person name="Gwinn M.L."/>
            <person name="DeBoy R.T."/>
            <person name="Madpu R."/>
            <person name="Daugherty S.C."/>
            <person name="Durkin A.S."/>
            <person name="Haft D.H."/>
            <person name="Nelson W.C."/>
            <person name="Peterson J.D."/>
            <person name="Pop M."/>
            <person name="Khouri H.M."/>
            <person name="Radune D."/>
            <person name="Benton J.L."/>
            <person name="Mahamoud Y."/>
            <person name="Jiang L."/>
            <person name="Hance I.R."/>
            <person name="Weidman J.F."/>
            <person name="Berry K.J."/>
            <person name="Plaut R.D."/>
            <person name="Wolf A.M."/>
            <person name="Watkins K.L."/>
            <person name="Nierman W.C."/>
            <person name="Hazen A."/>
            <person name="Cline R.T."/>
            <person name="Redmond C."/>
            <person name="Thwaite J.E."/>
            <person name="White O."/>
            <person name="Salzberg S.L."/>
            <person name="Thomason B."/>
            <person name="Friedlander A.M."/>
            <person name="Koehler T.M."/>
            <person name="Hanna P.C."/>
            <person name="Kolstoe A.-B."/>
            <person name="Fraser C.M."/>
        </authorList>
    </citation>
    <scope>NUCLEOTIDE SEQUENCE [LARGE SCALE GENOMIC DNA]</scope>
    <source>
        <strain>Ames / isolate Porton</strain>
    </source>
</reference>
<reference key="2">
    <citation type="journal article" date="2009" name="J. Bacteriol.">
        <title>The complete genome sequence of Bacillus anthracis Ames 'Ancestor'.</title>
        <authorList>
            <person name="Ravel J."/>
            <person name="Jiang L."/>
            <person name="Stanley S.T."/>
            <person name="Wilson M.R."/>
            <person name="Decker R.S."/>
            <person name="Read T.D."/>
            <person name="Worsham P."/>
            <person name="Keim P.S."/>
            <person name="Salzberg S.L."/>
            <person name="Fraser-Liggett C.M."/>
            <person name="Rasko D.A."/>
        </authorList>
    </citation>
    <scope>NUCLEOTIDE SEQUENCE [LARGE SCALE GENOMIC DNA]</scope>
    <source>
        <strain>Ames ancestor</strain>
    </source>
</reference>
<reference key="3">
    <citation type="submission" date="2004-01" db="EMBL/GenBank/DDBJ databases">
        <title>Complete genome sequence of Bacillus anthracis Sterne.</title>
        <authorList>
            <person name="Brettin T.S."/>
            <person name="Bruce D."/>
            <person name="Challacombe J.F."/>
            <person name="Gilna P."/>
            <person name="Han C."/>
            <person name="Hill K."/>
            <person name="Hitchcock P."/>
            <person name="Jackson P."/>
            <person name="Keim P."/>
            <person name="Longmire J."/>
            <person name="Lucas S."/>
            <person name="Okinaka R."/>
            <person name="Richardson P."/>
            <person name="Rubin E."/>
            <person name="Tice H."/>
        </authorList>
    </citation>
    <scope>NUCLEOTIDE SEQUENCE [LARGE SCALE GENOMIC DNA]</scope>
    <source>
        <strain>Sterne</strain>
    </source>
</reference>
<accession>Q81RZ3</accession>
<accession>Q6I070</accession>
<accession>Q6KU47</accession>
<comment type="function">
    <text evidence="1">Catalyzes a reversible aldol reaction between acetaldehyde and D-glyceraldehyde 3-phosphate to generate 2-deoxy-D-ribose 5-phosphate.</text>
</comment>
<comment type="catalytic activity">
    <reaction evidence="1">
        <text>2-deoxy-D-ribose 5-phosphate = D-glyceraldehyde 3-phosphate + acetaldehyde</text>
        <dbReference type="Rhea" id="RHEA:12821"/>
        <dbReference type="ChEBI" id="CHEBI:15343"/>
        <dbReference type="ChEBI" id="CHEBI:59776"/>
        <dbReference type="ChEBI" id="CHEBI:62877"/>
        <dbReference type="EC" id="4.1.2.4"/>
    </reaction>
</comment>
<comment type="pathway">
    <text evidence="1">Carbohydrate degradation; 2-deoxy-D-ribose 1-phosphate degradation; D-glyceraldehyde 3-phosphate and acetaldehyde from 2-deoxy-alpha-D-ribose 1-phosphate: step 2/2.</text>
</comment>
<comment type="subcellular location">
    <subcellularLocation>
        <location evidence="1">Cytoplasm</location>
    </subcellularLocation>
</comment>
<comment type="similarity">
    <text evidence="1">Belongs to the DeoC/FbaB aldolase family. DeoC type 1 subfamily.</text>
</comment>
<feature type="chain" id="PRO_0000057221" description="Deoxyribose-phosphate aldolase">
    <location>
        <begin position="1"/>
        <end position="223"/>
    </location>
</feature>
<feature type="active site" description="Proton donor/acceptor" evidence="1">
    <location>
        <position position="89"/>
    </location>
</feature>
<feature type="active site" description="Schiff-base intermediate with acetaldehyde" evidence="1">
    <location>
        <position position="152"/>
    </location>
</feature>
<feature type="active site" description="Proton donor/acceptor" evidence="1">
    <location>
        <position position="181"/>
    </location>
</feature>
<proteinExistence type="inferred from homology"/>
<organism>
    <name type="scientific">Bacillus anthracis</name>
    <dbReference type="NCBI Taxonomy" id="1392"/>
    <lineage>
        <taxon>Bacteria</taxon>
        <taxon>Bacillati</taxon>
        <taxon>Bacillota</taxon>
        <taxon>Bacilli</taxon>
        <taxon>Bacillales</taxon>
        <taxon>Bacillaceae</taxon>
        <taxon>Bacillus</taxon>
        <taxon>Bacillus cereus group</taxon>
    </lineage>
</organism>
<sequence length="223" mass="23411">MNIAKLIDHTILKANTTKEDVMKVIEEAKEYKFASVCINPTWVKLAAEELAGHDVDVCTVIGFPLGASTTETKAFETKDAIAKGATEVDMVINVGALKDGDNELVEKDIYEVVQAAKGKALVKVIIETCLLTDEEKVRACELSVKAGADFVKTSTGFSTGGATAEDIALMRKTVGPNVGVKASGGVRTREDAEKMVAAGASRVGASASVAIVLNDAKGATDNY</sequence>
<protein>
    <recommendedName>
        <fullName evidence="1">Deoxyribose-phosphate aldolase</fullName>
        <shortName evidence="1">DERA</shortName>
        <ecNumber evidence="1">4.1.2.4</ecNumber>
    </recommendedName>
    <alternativeName>
        <fullName evidence="1">2-deoxy-D-ribose 5-phosphate aldolase</fullName>
    </alternativeName>
    <alternativeName>
        <fullName evidence="1">Phosphodeoxyriboaldolase</fullName>
        <shortName evidence="1">Deoxyriboaldolase</shortName>
    </alternativeName>
</protein>
<keyword id="KW-0963">Cytoplasm</keyword>
<keyword id="KW-0456">Lyase</keyword>
<keyword id="KW-1185">Reference proteome</keyword>
<keyword id="KW-0704">Schiff base</keyword>
<name>DEOC_BACAN</name>